<sequence length="65" mass="7466">MPNPDNRSDNAEKLQEMVQNTIDNFNEAKETAELSNEKDRSAIEAKNQRRLESIDSLKSEIKDES</sequence>
<dbReference type="EMBL" id="AE017194">
    <property type="protein sequence ID" value="AAS42533.1"/>
    <property type="molecule type" value="Genomic_DNA"/>
</dbReference>
<dbReference type="SMR" id="Q733N0"/>
<dbReference type="KEGG" id="bca:BCE_3628"/>
<dbReference type="HOGENOM" id="CLU_178266_1_0_9"/>
<dbReference type="Proteomes" id="UP000002527">
    <property type="component" value="Chromosome"/>
</dbReference>
<dbReference type="GO" id="GO:0030436">
    <property type="term" value="P:asexual sporulation"/>
    <property type="evidence" value="ECO:0007669"/>
    <property type="project" value="UniProtKB-UniRule"/>
</dbReference>
<dbReference type="GO" id="GO:0030435">
    <property type="term" value="P:sporulation resulting in formation of a cellular spore"/>
    <property type="evidence" value="ECO:0007669"/>
    <property type="project" value="UniProtKB-KW"/>
</dbReference>
<dbReference type="HAMAP" id="MF_01506">
    <property type="entry name" value="Tlp"/>
    <property type="match status" value="1"/>
</dbReference>
<dbReference type="InterPro" id="IPR017524">
    <property type="entry name" value="SASP_thioredoxin-like"/>
</dbReference>
<dbReference type="NCBIfam" id="TIGR03090">
    <property type="entry name" value="SASP_tlp"/>
    <property type="match status" value="1"/>
</dbReference>
<dbReference type="Pfam" id="PF19824">
    <property type="entry name" value="Tlp"/>
    <property type="match status" value="1"/>
</dbReference>
<name>TLP_BACC1</name>
<organism>
    <name type="scientific">Bacillus cereus (strain ATCC 10987 / NRS 248)</name>
    <dbReference type="NCBI Taxonomy" id="222523"/>
    <lineage>
        <taxon>Bacteria</taxon>
        <taxon>Bacillati</taxon>
        <taxon>Bacillota</taxon>
        <taxon>Bacilli</taxon>
        <taxon>Bacillales</taxon>
        <taxon>Bacillaceae</taxon>
        <taxon>Bacillus</taxon>
        <taxon>Bacillus cereus group</taxon>
    </lineage>
</organism>
<protein>
    <recommendedName>
        <fullName evidence="1">Small, acid-soluble spore protein Tlp</fullName>
    </recommendedName>
</protein>
<evidence type="ECO:0000255" key="1">
    <source>
        <dbReference type="HAMAP-Rule" id="MF_01506"/>
    </source>
</evidence>
<proteinExistence type="inferred from homology"/>
<reference key="1">
    <citation type="journal article" date="2004" name="Nucleic Acids Res.">
        <title>The genome sequence of Bacillus cereus ATCC 10987 reveals metabolic adaptations and a large plasmid related to Bacillus anthracis pXO1.</title>
        <authorList>
            <person name="Rasko D.A."/>
            <person name="Ravel J."/>
            <person name="Oekstad O.A."/>
            <person name="Helgason E."/>
            <person name="Cer R.Z."/>
            <person name="Jiang L."/>
            <person name="Shores K.A."/>
            <person name="Fouts D.E."/>
            <person name="Tourasse N.J."/>
            <person name="Angiuoli S.V."/>
            <person name="Kolonay J.F."/>
            <person name="Nelson W.C."/>
            <person name="Kolstoe A.-B."/>
            <person name="Fraser C.M."/>
            <person name="Read T.D."/>
        </authorList>
    </citation>
    <scope>NUCLEOTIDE SEQUENCE [LARGE SCALE GENOMIC DNA]</scope>
    <source>
        <strain>ATCC 10987 / NRS 248</strain>
    </source>
</reference>
<comment type="subcellular location">
    <subcellularLocation>
        <location evidence="1">Spore core</location>
    </subcellularLocation>
</comment>
<comment type="induction">
    <text evidence="1">Expressed only in the forespore compartment of sporulating cells.</text>
</comment>
<comment type="similarity">
    <text evidence="1">Belongs to the Tlp family.</text>
</comment>
<feature type="chain" id="PRO_0000221495" description="Small, acid-soluble spore protein Tlp">
    <location>
        <begin position="1"/>
        <end position="65"/>
    </location>
</feature>
<accession>Q733N0</accession>
<gene>
    <name evidence="1" type="primary">tlp</name>
    <name type="ordered locus">BCE_3628</name>
</gene>
<keyword id="KW-0749">Sporulation</keyword>